<dbReference type="EMBL" id="Z75302">
    <property type="status" value="NOT_ANNOTATED_CDS"/>
    <property type="molecule type" value="Genomic_DNA"/>
</dbReference>
<dbReference type="EMBL" id="AF480019">
    <property type="protein sequence ID" value="AAL79332.1"/>
    <property type="molecule type" value="Genomic_DNA"/>
</dbReference>
<dbReference type="EnsemblFungi" id="YLR466C-A_mRNA">
    <property type="protein sequence ID" value="YLR466C-A"/>
    <property type="gene ID" value="YLR466C-A"/>
</dbReference>
<dbReference type="EnsemblFungi" id="YLR467C-A_mRNA">
    <property type="protein sequence ID" value="YLR467C-A"/>
    <property type="gene ID" value="YLR467C-A"/>
</dbReference>
<dbReference type="EnsemblFungi" id="YOR396C-A_mRNA">
    <property type="protein sequence ID" value="YOR396C-A"/>
    <property type="gene ID" value="YOR396C-A"/>
</dbReference>
<dbReference type="AGR" id="SGD:S000028719"/>
<dbReference type="SGD" id="S000028719">
    <property type="gene designation" value="YOR396C-A"/>
</dbReference>
<dbReference type="GeneTree" id="ENSGT01130000278822"/>
<dbReference type="HOGENOM" id="CLU_139933_0_0_1"/>
<dbReference type="GO" id="GO:0016020">
    <property type="term" value="C:membrane"/>
    <property type="evidence" value="ECO:0007669"/>
    <property type="project" value="UniProtKB-SubCell"/>
</dbReference>
<feature type="chain" id="PRO_0000406014" description="Putative UPF0479 protein YOR396C-A">
    <location>
        <begin position="1"/>
        <end position="160"/>
    </location>
</feature>
<feature type="transmembrane region" description="Helical" evidence="1">
    <location>
        <begin position="39"/>
        <end position="59"/>
    </location>
</feature>
<feature type="transmembrane region" description="Helical" evidence="1">
    <location>
        <begin position="136"/>
        <end position="156"/>
    </location>
</feature>
<name>YOR96_YEAST</name>
<evidence type="ECO:0000255" key="1"/>
<evidence type="ECO:0000305" key="2"/>
<evidence type="ECO:0000305" key="3">
    <source>
    </source>
</evidence>
<accession>P0CL40</accession>
<accession>Q8TF92</accession>
<accession>Q8TGK3</accession>
<organism>
    <name type="scientific">Saccharomyces cerevisiae (strain ATCC 204508 / S288c)</name>
    <name type="common">Baker's yeast</name>
    <dbReference type="NCBI Taxonomy" id="559292"/>
    <lineage>
        <taxon>Eukaryota</taxon>
        <taxon>Fungi</taxon>
        <taxon>Dikarya</taxon>
        <taxon>Ascomycota</taxon>
        <taxon>Saccharomycotina</taxon>
        <taxon>Saccharomycetes</taxon>
        <taxon>Saccharomycetales</taxon>
        <taxon>Saccharomycetaceae</taxon>
        <taxon>Saccharomyces</taxon>
    </lineage>
</organism>
<gene>
    <name type="ordered locus">YOR396C-A</name>
</gene>
<sequence length="160" mass="18568">MMPAKLQLDVLRTLQSSARHGTQTLKNSNFLERFHKDRIVFCLPFFPALFLVPVQKVLQHLCLRFTQVAPYFIIQLFDLPSRHAENLAPLLASCRIQYTNCFSSSSNGQVPSIISLYLRVDLSPFYAKIFQISYRVPMIWLDVFQVFFVFLVISQHSLHS</sequence>
<protein>
    <recommendedName>
        <fullName>Putative UPF0479 protein YOR396C-A</fullName>
    </recommendedName>
</protein>
<keyword id="KW-0472">Membrane</keyword>
<keyword id="KW-0812">Transmembrane</keyword>
<keyword id="KW-1133">Transmembrane helix</keyword>
<proteinExistence type="uncertain"/>
<comment type="subcellular location">
    <subcellularLocation>
        <location evidence="2">Membrane</location>
        <topology evidence="2">Multi-pass membrane protein</topology>
    </subcellularLocation>
</comment>
<comment type="miscellaneous">
    <text evidence="2">Completely overlaps YRF1-8.</text>
</comment>
<comment type="similarity">
    <text evidence="2">Belongs to the UPF0479 family.</text>
</comment>
<comment type="caution">
    <text evidence="3">Product of a dubious gene prediction unlikely to encode a functional protein. Because of that it is not part of the S.cerevisiae S288c complete/reference proteome set.</text>
</comment>
<reference key="1">
    <citation type="journal article" date="1997" name="Nature">
        <title>The nucleotide sequence of Saccharomyces cerevisiae chromosome XV.</title>
        <authorList>
            <person name="Dujon B."/>
            <person name="Albermann K."/>
            <person name="Aldea M."/>
            <person name="Alexandraki D."/>
            <person name="Ansorge W."/>
            <person name="Arino J."/>
            <person name="Benes V."/>
            <person name="Bohn C."/>
            <person name="Bolotin-Fukuhara M."/>
            <person name="Bordonne R."/>
            <person name="Boyer J."/>
            <person name="Camasses A."/>
            <person name="Casamayor A."/>
            <person name="Casas C."/>
            <person name="Cheret G."/>
            <person name="Cziepluch C."/>
            <person name="Daignan-Fornier B."/>
            <person name="Dang V.-D."/>
            <person name="de Haan M."/>
            <person name="Delius H."/>
            <person name="Durand P."/>
            <person name="Fairhead C."/>
            <person name="Feldmann H."/>
            <person name="Gaillon L."/>
            <person name="Galisson F."/>
            <person name="Gamo F.-J."/>
            <person name="Gancedo C."/>
            <person name="Goffeau A."/>
            <person name="Goulding S.E."/>
            <person name="Grivell L.A."/>
            <person name="Habbig B."/>
            <person name="Hand N.J."/>
            <person name="Hani J."/>
            <person name="Hattenhorst U."/>
            <person name="Hebling U."/>
            <person name="Hernando Y."/>
            <person name="Herrero E."/>
            <person name="Heumann K."/>
            <person name="Hiesel R."/>
            <person name="Hilger F."/>
            <person name="Hofmann B."/>
            <person name="Hollenberg C.P."/>
            <person name="Hughes B."/>
            <person name="Jauniaux J.-C."/>
            <person name="Kalogeropoulos A."/>
            <person name="Katsoulou C."/>
            <person name="Kordes E."/>
            <person name="Lafuente M.J."/>
            <person name="Landt O."/>
            <person name="Louis E.J."/>
            <person name="Maarse A.C."/>
            <person name="Madania A."/>
            <person name="Mannhaupt G."/>
            <person name="Marck C."/>
            <person name="Martin R.P."/>
            <person name="Mewes H.-W."/>
            <person name="Michaux G."/>
            <person name="Paces V."/>
            <person name="Parle-McDermott A.G."/>
            <person name="Pearson B.M."/>
            <person name="Perrin A."/>
            <person name="Pettersson B."/>
            <person name="Poch O."/>
            <person name="Pohl T.M."/>
            <person name="Poirey R."/>
            <person name="Portetelle D."/>
            <person name="Pujol A."/>
            <person name="Purnelle B."/>
            <person name="Ramezani Rad M."/>
            <person name="Rechmann S."/>
            <person name="Schwager C."/>
            <person name="Schweizer M."/>
            <person name="Sor F."/>
            <person name="Sterky F."/>
            <person name="Tarassov I.A."/>
            <person name="Teodoru C."/>
            <person name="Tettelin H."/>
            <person name="Thierry A."/>
            <person name="Tobiasch E."/>
            <person name="Tzermia M."/>
            <person name="Uhlen M."/>
            <person name="Unseld M."/>
            <person name="Valens M."/>
            <person name="Vandenbol M."/>
            <person name="Vetter I."/>
            <person name="Vlcek C."/>
            <person name="Voet M."/>
            <person name="Volckaert G."/>
            <person name="Voss H."/>
            <person name="Wambutt R."/>
            <person name="Wedler H."/>
            <person name="Wiemann S."/>
            <person name="Winsor B."/>
            <person name="Wolfe K.H."/>
            <person name="Zollner A."/>
            <person name="Zumstein E."/>
            <person name="Kleine K."/>
        </authorList>
    </citation>
    <scope>NUCLEOTIDE SEQUENCE [LARGE SCALE GENOMIC DNA]</scope>
    <source>
        <strain>ATCC 204508 / S288c</strain>
    </source>
</reference>
<reference key="2">
    <citation type="journal article" date="2014" name="G3 (Bethesda)">
        <title>The reference genome sequence of Saccharomyces cerevisiae: Then and now.</title>
        <authorList>
            <person name="Engel S.R."/>
            <person name="Dietrich F.S."/>
            <person name="Fisk D.G."/>
            <person name="Binkley G."/>
            <person name="Balakrishnan R."/>
            <person name="Costanzo M.C."/>
            <person name="Dwight S.S."/>
            <person name="Hitz B.C."/>
            <person name="Karra K."/>
            <person name="Nash R.S."/>
            <person name="Weng S."/>
            <person name="Wong E.D."/>
            <person name="Lloyd P."/>
            <person name="Skrzypek M.S."/>
            <person name="Miyasato S.R."/>
            <person name="Simison M."/>
            <person name="Cherry J.M."/>
        </authorList>
    </citation>
    <scope>GENOME REANNOTATION</scope>
    <source>
        <strain>ATCC 204508 / S288c</strain>
    </source>
</reference>
<reference key="3">
    <citation type="journal article" date="2002" name="Nat. Biotechnol.">
        <title>An integrated approach for finding overlooked genes in yeast.</title>
        <authorList>
            <person name="Kumar A."/>
            <person name="Harrison P.M."/>
            <person name="Cheung K.-H."/>
            <person name="Lan N."/>
            <person name="Echols N."/>
            <person name="Bertone P."/>
            <person name="Miller P."/>
            <person name="Gerstein M.B."/>
            <person name="Snyder M."/>
        </authorList>
    </citation>
    <scope>NUCLEOTIDE SEQUENCE [GENOMIC DNA]</scope>
</reference>